<evidence type="ECO:0000255" key="1">
    <source>
        <dbReference type="HAMAP-Rule" id="MF_01179"/>
    </source>
</evidence>
<keyword id="KW-0131">Cell cycle</keyword>
<keyword id="KW-0132">Cell division</keyword>
<keyword id="KW-0227">DNA damage</keyword>
<keyword id="KW-0717">Septation</keyword>
<keyword id="KW-0742">SOS response</keyword>
<feature type="chain" id="PRO_0000072308" description="Cell division inhibitor SulA">
    <location>
        <begin position="1"/>
        <end position="169"/>
    </location>
</feature>
<feature type="region of interest" description="FtsZ binding" evidence="1">
    <location>
        <begin position="106"/>
        <end position="112"/>
    </location>
</feature>
<feature type="region of interest" description="Lon protease binding" evidence="1">
    <location>
        <begin position="162"/>
        <end position="169"/>
    </location>
</feature>
<feature type="site" description="Essential for degradation by Lon protease" evidence="1">
    <location>
        <position position="169"/>
    </location>
</feature>
<sequence>MYTSGYANRSSSFPTTTHNAARTATENAAAGLVSEVVYHEDQPMMAQLLLLPLLRQLGQQSRWQLWLTPQQKLSREWVQSSGLPLTKVMQISQLAPRHTLESMIRALRTGNYSVVIGWMTEELTEEEHASLVEAAKVGNAVGFIMRPVRAHALPRRQHSGLKIHSNLYH</sequence>
<dbReference type="EMBL" id="AL513382">
    <property type="protein sequence ID" value="CAD08197.1"/>
    <property type="molecule type" value="Genomic_DNA"/>
</dbReference>
<dbReference type="EMBL" id="AE014613">
    <property type="protein sequence ID" value="AAO69467.1"/>
    <property type="molecule type" value="Genomic_DNA"/>
</dbReference>
<dbReference type="RefSeq" id="NP_455569.1">
    <property type="nucleotide sequence ID" value="NC_003198.1"/>
</dbReference>
<dbReference type="RefSeq" id="WP_000288732.1">
    <property type="nucleotide sequence ID" value="NZ_WSUR01000013.1"/>
</dbReference>
<dbReference type="SMR" id="P0A242"/>
<dbReference type="STRING" id="220341.gene:17585075"/>
<dbReference type="KEGG" id="stt:t1849"/>
<dbReference type="KEGG" id="sty:STY1092"/>
<dbReference type="PATRIC" id="fig|220341.7.peg.1100"/>
<dbReference type="eggNOG" id="COG5404">
    <property type="taxonomic scope" value="Bacteria"/>
</dbReference>
<dbReference type="HOGENOM" id="CLU_118972_1_0_6"/>
<dbReference type="OMA" id="YGFIMRP"/>
<dbReference type="OrthoDB" id="6464784at2"/>
<dbReference type="Proteomes" id="UP000000541">
    <property type="component" value="Chromosome"/>
</dbReference>
<dbReference type="Proteomes" id="UP000002670">
    <property type="component" value="Chromosome"/>
</dbReference>
<dbReference type="GO" id="GO:0000917">
    <property type="term" value="P:division septum assembly"/>
    <property type="evidence" value="ECO:0007669"/>
    <property type="project" value="UniProtKB-KW"/>
</dbReference>
<dbReference type="GO" id="GO:0006281">
    <property type="term" value="P:DNA repair"/>
    <property type="evidence" value="ECO:0007669"/>
    <property type="project" value="TreeGrafter"/>
</dbReference>
<dbReference type="GO" id="GO:0051782">
    <property type="term" value="P:negative regulation of cell division"/>
    <property type="evidence" value="ECO:0007669"/>
    <property type="project" value="UniProtKB-UniRule"/>
</dbReference>
<dbReference type="GO" id="GO:0009432">
    <property type="term" value="P:SOS response"/>
    <property type="evidence" value="ECO:0007669"/>
    <property type="project" value="UniProtKB-UniRule"/>
</dbReference>
<dbReference type="FunFam" id="3.40.50.300:FF:000417">
    <property type="entry name" value="Cell division inhibitor SulA"/>
    <property type="match status" value="1"/>
</dbReference>
<dbReference type="Gene3D" id="3.40.50.300">
    <property type="entry name" value="P-loop containing nucleotide triphosphate hydrolases"/>
    <property type="match status" value="1"/>
</dbReference>
<dbReference type="HAMAP" id="MF_01179">
    <property type="entry name" value="SulA"/>
    <property type="match status" value="1"/>
</dbReference>
<dbReference type="InterPro" id="IPR004596">
    <property type="entry name" value="Cell_div_suppressor_SulA"/>
</dbReference>
<dbReference type="InterPro" id="IPR027417">
    <property type="entry name" value="P-loop_NTPase"/>
</dbReference>
<dbReference type="InterPro" id="IPR050356">
    <property type="entry name" value="SulA_CellDiv_inhibitor"/>
</dbReference>
<dbReference type="InterPro" id="IPR047696">
    <property type="entry name" value="SulA_enterobact"/>
</dbReference>
<dbReference type="NCBIfam" id="NF007892">
    <property type="entry name" value="PRK10595.1"/>
    <property type="match status" value="1"/>
</dbReference>
<dbReference type="NCBIfam" id="TIGR00623">
    <property type="entry name" value="SOS_SulA_coli"/>
    <property type="match status" value="1"/>
</dbReference>
<dbReference type="PANTHER" id="PTHR35369">
    <property type="entry name" value="BLR3025 PROTEIN-RELATED"/>
    <property type="match status" value="1"/>
</dbReference>
<dbReference type="PANTHER" id="PTHR35369:SF4">
    <property type="entry name" value="CELL DIVISION INHIBITOR SULA"/>
    <property type="match status" value="1"/>
</dbReference>
<dbReference type="Pfam" id="PF03846">
    <property type="entry name" value="SulA"/>
    <property type="match status" value="1"/>
</dbReference>
<dbReference type="PIRSF" id="PIRSF003093">
    <property type="entry name" value="SulA"/>
    <property type="match status" value="1"/>
</dbReference>
<dbReference type="SUPFAM" id="SSF52540">
    <property type="entry name" value="P-loop containing nucleoside triphosphate hydrolases"/>
    <property type="match status" value="1"/>
</dbReference>
<name>SULA_SALTI</name>
<accession>P0A242</accession>
<accession>P08847</accession>
<organism>
    <name type="scientific">Salmonella typhi</name>
    <dbReference type="NCBI Taxonomy" id="90370"/>
    <lineage>
        <taxon>Bacteria</taxon>
        <taxon>Pseudomonadati</taxon>
        <taxon>Pseudomonadota</taxon>
        <taxon>Gammaproteobacteria</taxon>
        <taxon>Enterobacterales</taxon>
        <taxon>Enterobacteriaceae</taxon>
        <taxon>Salmonella</taxon>
    </lineage>
</organism>
<proteinExistence type="inferred from homology"/>
<comment type="function">
    <text evidence="1">Component of the SOS system and an inhibitor of cell division. Accumulation of SulA causes rapid cessation of cell division and the appearance of long, non-septate filaments. In the presence of GTP, binds a polymerization-competent form of FtsZ in a 1:1 ratio, thus inhibiting FtsZ polymerization and therefore preventing it from participating in the assembly of the Z ring. This mechanism prevents the premature segregation of damaged DNA to daughter cells during cell division.</text>
</comment>
<comment type="subunit">
    <text evidence="1">Interacts with FtsZ.</text>
</comment>
<comment type="induction">
    <text evidence="1">By DNA damage, as part of the SOS response.</text>
</comment>
<comment type="PTM">
    <text evidence="1">Is rapidly cleaved and degraded by the Lon protease once DNA damage is repaired.</text>
</comment>
<comment type="similarity">
    <text evidence="1">Belongs to the SulA family.</text>
</comment>
<protein>
    <recommendedName>
        <fullName evidence="1">Cell division inhibitor SulA</fullName>
    </recommendedName>
</protein>
<gene>
    <name evidence="1" type="primary">sulA</name>
    <name type="ordered locus">STY1092</name>
    <name type="ordered locus">t1849</name>
</gene>
<reference key="1">
    <citation type="journal article" date="2001" name="Nature">
        <title>Complete genome sequence of a multiple drug resistant Salmonella enterica serovar Typhi CT18.</title>
        <authorList>
            <person name="Parkhill J."/>
            <person name="Dougan G."/>
            <person name="James K.D."/>
            <person name="Thomson N.R."/>
            <person name="Pickard D."/>
            <person name="Wain J."/>
            <person name="Churcher C.M."/>
            <person name="Mungall K.L."/>
            <person name="Bentley S.D."/>
            <person name="Holden M.T.G."/>
            <person name="Sebaihia M."/>
            <person name="Baker S."/>
            <person name="Basham D."/>
            <person name="Brooks K."/>
            <person name="Chillingworth T."/>
            <person name="Connerton P."/>
            <person name="Cronin A."/>
            <person name="Davis P."/>
            <person name="Davies R.M."/>
            <person name="Dowd L."/>
            <person name="White N."/>
            <person name="Farrar J."/>
            <person name="Feltwell T."/>
            <person name="Hamlin N."/>
            <person name="Haque A."/>
            <person name="Hien T.T."/>
            <person name="Holroyd S."/>
            <person name="Jagels K."/>
            <person name="Krogh A."/>
            <person name="Larsen T.S."/>
            <person name="Leather S."/>
            <person name="Moule S."/>
            <person name="O'Gaora P."/>
            <person name="Parry C."/>
            <person name="Quail M.A."/>
            <person name="Rutherford K.M."/>
            <person name="Simmonds M."/>
            <person name="Skelton J."/>
            <person name="Stevens K."/>
            <person name="Whitehead S."/>
            <person name="Barrell B.G."/>
        </authorList>
    </citation>
    <scope>NUCLEOTIDE SEQUENCE [LARGE SCALE GENOMIC DNA]</scope>
    <source>
        <strain>CT18</strain>
    </source>
</reference>
<reference key="2">
    <citation type="journal article" date="2003" name="J. Bacteriol.">
        <title>Comparative genomics of Salmonella enterica serovar Typhi strains Ty2 and CT18.</title>
        <authorList>
            <person name="Deng W."/>
            <person name="Liou S.-R."/>
            <person name="Plunkett G. III"/>
            <person name="Mayhew G.F."/>
            <person name="Rose D.J."/>
            <person name="Burland V."/>
            <person name="Kodoyianni V."/>
            <person name="Schwartz D.C."/>
            <person name="Blattner F.R."/>
        </authorList>
    </citation>
    <scope>NUCLEOTIDE SEQUENCE [LARGE SCALE GENOMIC DNA]</scope>
    <source>
        <strain>ATCC 700931 / Ty2</strain>
    </source>
</reference>